<comment type="function">
    <text evidence="1">An essential GTPase that binds both GDP and GTP, with rapid nucleotide exchange. Plays a role in 16S rRNA processing and 30S ribosomal subunit biogenesis and possibly also in cell cycle regulation and energy metabolism.</text>
</comment>
<comment type="subunit">
    <text evidence="1">Monomer.</text>
</comment>
<comment type="subcellular location">
    <subcellularLocation>
        <location>Cytoplasm</location>
    </subcellularLocation>
    <subcellularLocation>
        <location evidence="1">Cell inner membrane</location>
        <topology evidence="1">Peripheral membrane protein</topology>
    </subcellularLocation>
</comment>
<comment type="similarity">
    <text evidence="1 2">Belongs to the TRAFAC class TrmE-Era-EngA-EngB-Septin-like GTPase superfamily. Era GTPase family.</text>
</comment>
<protein>
    <recommendedName>
        <fullName evidence="1">GTPase Era</fullName>
    </recommendedName>
</protein>
<evidence type="ECO:0000255" key="1">
    <source>
        <dbReference type="HAMAP-Rule" id="MF_00367"/>
    </source>
</evidence>
<evidence type="ECO:0000255" key="2">
    <source>
        <dbReference type="PROSITE-ProRule" id="PRU01050"/>
    </source>
</evidence>
<sequence length="293" mass="33595">MYNQRTISVCIIGRPNSGKSTLLNRIIGEKLSIVTPKVQTTRSIITGIITLKDTQVILYDTPGIFEPKGSLEKAMVRCAWSSLHSADLVMLIIDSLKPFDDVTHDILDKLRSLNIVPIFLLNKIDIESKYLDDIKAFLIGNHPDSLFFPISALSGKNINGLLEYITGKAQIAPWLYAEDDITDLPMRFIAAEITREQLFFNLQQELPYKLTVQTEKWEDLKDKSVKINQVIIVSRASYKTIILGKNGSKIREIGSKSRMQMERFFGFPVHLFLFVKVHELWENHPDFYQYMKI</sequence>
<proteinExistence type="inferred from homology"/>
<organism>
    <name type="scientific">Rickettsia akari (strain Hartford)</name>
    <dbReference type="NCBI Taxonomy" id="293614"/>
    <lineage>
        <taxon>Bacteria</taxon>
        <taxon>Pseudomonadati</taxon>
        <taxon>Pseudomonadota</taxon>
        <taxon>Alphaproteobacteria</taxon>
        <taxon>Rickettsiales</taxon>
        <taxon>Rickettsiaceae</taxon>
        <taxon>Rickettsieae</taxon>
        <taxon>Rickettsia</taxon>
        <taxon>spotted fever group</taxon>
    </lineage>
</organism>
<reference key="1">
    <citation type="submission" date="2007-09" db="EMBL/GenBank/DDBJ databases">
        <title>Complete genome sequence of Rickettsia akari.</title>
        <authorList>
            <person name="Madan A."/>
            <person name="Fahey J."/>
            <person name="Helton E."/>
            <person name="Ketteman M."/>
            <person name="Madan A."/>
            <person name="Rodrigues S."/>
            <person name="Sanchez A."/>
            <person name="Whiting M."/>
            <person name="Dasch G."/>
            <person name="Eremeeva M."/>
        </authorList>
    </citation>
    <scope>NUCLEOTIDE SEQUENCE [LARGE SCALE GENOMIC DNA]</scope>
    <source>
        <strain>Hartford</strain>
    </source>
</reference>
<name>ERA_RICAH</name>
<dbReference type="EMBL" id="CP000847">
    <property type="protein sequence ID" value="ABV74505.1"/>
    <property type="molecule type" value="Genomic_DNA"/>
</dbReference>
<dbReference type="RefSeq" id="WP_012013375.1">
    <property type="nucleotide sequence ID" value="NC_009881.1"/>
</dbReference>
<dbReference type="SMR" id="A8GM80"/>
<dbReference type="STRING" id="293614.A1C_00875"/>
<dbReference type="KEGG" id="rak:A1C_00875"/>
<dbReference type="eggNOG" id="COG1159">
    <property type="taxonomic scope" value="Bacteria"/>
</dbReference>
<dbReference type="HOGENOM" id="CLU_038009_1_1_5"/>
<dbReference type="Proteomes" id="UP000006830">
    <property type="component" value="Chromosome"/>
</dbReference>
<dbReference type="GO" id="GO:0005829">
    <property type="term" value="C:cytosol"/>
    <property type="evidence" value="ECO:0007669"/>
    <property type="project" value="TreeGrafter"/>
</dbReference>
<dbReference type="GO" id="GO:0005886">
    <property type="term" value="C:plasma membrane"/>
    <property type="evidence" value="ECO:0007669"/>
    <property type="project" value="UniProtKB-SubCell"/>
</dbReference>
<dbReference type="GO" id="GO:0005525">
    <property type="term" value="F:GTP binding"/>
    <property type="evidence" value="ECO:0007669"/>
    <property type="project" value="UniProtKB-UniRule"/>
</dbReference>
<dbReference type="GO" id="GO:0003924">
    <property type="term" value="F:GTPase activity"/>
    <property type="evidence" value="ECO:0007669"/>
    <property type="project" value="UniProtKB-UniRule"/>
</dbReference>
<dbReference type="GO" id="GO:0043024">
    <property type="term" value="F:ribosomal small subunit binding"/>
    <property type="evidence" value="ECO:0007669"/>
    <property type="project" value="TreeGrafter"/>
</dbReference>
<dbReference type="GO" id="GO:0070181">
    <property type="term" value="F:small ribosomal subunit rRNA binding"/>
    <property type="evidence" value="ECO:0007669"/>
    <property type="project" value="UniProtKB-UniRule"/>
</dbReference>
<dbReference type="GO" id="GO:0000028">
    <property type="term" value="P:ribosomal small subunit assembly"/>
    <property type="evidence" value="ECO:0007669"/>
    <property type="project" value="TreeGrafter"/>
</dbReference>
<dbReference type="CDD" id="cd04163">
    <property type="entry name" value="Era"/>
    <property type="match status" value="1"/>
</dbReference>
<dbReference type="CDD" id="cd22534">
    <property type="entry name" value="KH-II_Era"/>
    <property type="match status" value="1"/>
</dbReference>
<dbReference type="Gene3D" id="3.30.300.20">
    <property type="match status" value="1"/>
</dbReference>
<dbReference type="Gene3D" id="3.40.50.300">
    <property type="entry name" value="P-loop containing nucleotide triphosphate hydrolases"/>
    <property type="match status" value="1"/>
</dbReference>
<dbReference type="HAMAP" id="MF_00367">
    <property type="entry name" value="GTPase_Era"/>
    <property type="match status" value="1"/>
</dbReference>
<dbReference type="InterPro" id="IPR030388">
    <property type="entry name" value="G_ERA_dom"/>
</dbReference>
<dbReference type="InterPro" id="IPR006073">
    <property type="entry name" value="GTP-bd"/>
</dbReference>
<dbReference type="InterPro" id="IPR005662">
    <property type="entry name" value="GTPase_Era-like"/>
</dbReference>
<dbReference type="InterPro" id="IPR015946">
    <property type="entry name" value="KH_dom-like_a/b"/>
</dbReference>
<dbReference type="InterPro" id="IPR004044">
    <property type="entry name" value="KH_dom_type_2"/>
</dbReference>
<dbReference type="InterPro" id="IPR009019">
    <property type="entry name" value="KH_sf_prok-type"/>
</dbReference>
<dbReference type="InterPro" id="IPR027417">
    <property type="entry name" value="P-loop_NTPase"/>
</dbReference>
<dbReference type="InterPro" id="IPR005225">
    <property type="entry name" value="Small_GTP-bd"/>
</dbReference>
<dbReference type="NCBIfam" id="TIGR00436">
    <property type="entry name" value="era"/>
    <property type="match status" value="1"/>
</dbReference>
<dbReference type="NCBIfam" id="NF000908">
    <property type="entry name" value="PRK00089.1"/>
    <property type="match status" value="1"/>
</dbReference>
<dbReference type="NCBIfam" id="TIGR00231">
    <property type="entry name" value="small_GTP"/>
    <property type="match status" value="1"/>
</dbReference>
<dbReference type="PANTHER" id="PTHR42698">
    <property type="entry name" value="GTPASE ERA"/>
    <property type="match status" value="1"/>
</dbReference>
<dbReference type="PANTHER" id="PTHR42698:SF1">
    <property type="entry name" value="GTPASE ERA, MITOCHONDRIAL"/>
    <property type="match status" value="1"/>
</dbReference>
<dbReference type="Pfam" id="PF07650">
    <property type="entry name" value="KH_2"/>
    <property type="match status" value="1"/>
</dbReference>
<dbReference type="Pfam" id="PF01926">
    <property type="entry name" value="MMR_HSR1"/>
    <property type="match status" value="1"/>
</dbReference>
<dbReference type="SUPFAM" id="SSF52540">
    <property type="entry name" value="P-loop containing nucleoside triphosphate hydrolases"/>
    <property type="match status" value="1"/>
</dbReference>
<dbReference type="SUPFAM" id="SSF54814">
    <property type="entry name" value="Prokaryotic type KH domain (KH-domain type II)"/>
    <property type="match status" value="1"/>
</dbReference>
<dbReference type="PROSITE" id="PS51713">
    <property type="entry name" value="G_ERA"/>
    <property type="match status" value="1"/>
</dbReference>
<dbReference type="PROSITE" id="PS50823">
    <property type="entry name" value="KH_TYPE_2"/>
    <property type="match status" value="1"/>
</dbReference>
<accession>A8GM80</accession>
<keyword id="KW-0997">Cell inner membrane</keyword>
<keyword id="KW-1003">Cell membrane</keyword>
<keyword id="KW-0963">Cytoplasm</keyword>
<keyword id="KW-0342">GTP-binding</keyword>
<keyword id="KW-0472">Membrane</keyword>
<keyword id="KW-0547">Nucleotide-binding</keyword>
<keyword id="KW-0690">Ribosome biogenesis</keyword>
<keyword id="KW-0694">RNA-binding</keyword>
<keyword id="KW-0699">rRNA-binding</keyword>
<gene>
    <name evidence="1" type="primary">era</name>
    <name type="ordered locus">A1C_00875</name>
</gene>
<feature type="chain" id="PRO_1000079727" description="GTPase Era">
    <location>
        <begin position="1"/>
        <end position="293"/>
    </location>
</feature>
<feature type="domain" description="Era-type G" evidence="2">
    <location>
        <begin position="5"/>
        <end position="174"/>
    </location>
</feature>
<feature type="domain" description="KH type-2" evidence="1">
    <location>
        <begin position="202"/>
        <end position="279"/>
    </location>
</feature>
<feature type="region of interest" description="G1" evidence="2">
    <location>
        <begin position="13"/>
        <end position="20"/>
    </location>
</feature>
<feature type="region of interest" description="G2" evidence="2">
    <location>
        <begin position="39"/>
        <end position="43"/>
    </location>
</feature>
<feature type="region of interest" description="G3" evidence="2">
    <location>
        <begin position="60"/>
        <end position="63"/>
    </location>
</feature>
<feature type="region of interest" description="G4" evidence="2">
    <location>
        <begin position="122"/>
        <end position="125"/>
    </location>
</feature>
<feature type="region of interest" description="G5" evidence="2">
    <location>
        <begin position="150"/>
        <end position="152"/>
    </location>
</feature>
<feature type="binding site" evidence="1">
    <location>
        <begin position="13"/>
        <end position="20"/>
    </location>
    <ligand>
        <name>GTP</name>
        <dbReference type="ChEBI" id="CHEBI:37565"/>
    </ligand>
</feature>
<feature type="binding site" evidence="1">
    <location>
        <begin position="60"/>
        <end position="64"/>
    </location>
    <ligand>
        <name>GTP</name>
        <dbReference type="ChEBI" id="CHEBI:37565"/>
    </ligand>
</feature>
<feature type="binding site" evidence="1">
    <location>
        <begin position="122"/>
        <end position="125"/>
    </location>
    <ligand>
        <name>GTP</name>
        <dbReference type="ChEBI" id="CHEBI:37565"/>
    </ligand>
</feature>